<dbReference type="EC" id="2.1.1.-" evidence="1"/>
<dbReference type="EMBL" id="CP000025">
    <property type="protein sequence ID" value="AAW35582.1"/>
    <property type="molecule type" value="Genomic_DNA"/>
</dbReference>
<dbReference type="RefSeq" id="WP_002867206.1">
    <property type="nucleotide sequence ID" value="NC_003912.7"/>
</dbReference>
<dbReference type="SMR" id="Q5HTY7"/>
<dbReference type="KEGG" id="cjr:CJE1260"/>
<dbReference type="HOGENOM" id="CLU_049382_1_0_7"/>
<dbReference type="GO" id="GO:0005737">
    <property type="term" value="C:cytoplasm"/>
    <property type="evidence" value="ECO:0007669"/>
    <property type="project" value="UniProtKB-SubCell"/>
</dbReference>
<dbReference type="GO" id="GO:0016279">
    <property type="term" value="F:protein-lysine N-methyltransferase activity"/>
    <property type="evidence" value="ECO:0007669"/>
    <property type="project" value="RHEA"/>
</dbReference>
<dbReference type="GO" id="GO:0032259">
    <property type="term" value="P:methylation"/>
    <property type="evidence" value="ECO:0007669"/>
    <property type="project" value="UniProtKB-KW"/>
</dbReference>
<dbReference type="CDD" id="cd02440">
    <property type="entry name" value="AdoMet_MTases"/>
    <property type="match status" value="1"/>
</dbReference>
<dbReference type="Gene3D" id="3.40.50.150">
    <property type="entry name" value="Vaccinia Virus protein VP39"/>
    <property type="match status" value="1"/>
</dbReference>
<dbReference type="HAMAP" id="MF_00735">
    <property type="entry name" value="Methyltr_PrmA"/>
    <property type="match status" value="1"/>
</dbReference>
<dbReference type="InterPro" id="IPR050078">
    <property type="entry name" value="Ribosomal_L11_MeTrfase_PrmA"/>
</dbReference>
<dbReference type="InterPro" id="IPR004498">
    <property type="entry name" value="Ribosomal_PrmA_MeTrfase"/>
</dbReference>
<dbReference type="InterPro" id="IPR029063">
    <property type="entry name" value="SAM-dependent_MTases_sf"/>
</dbReference>
<dbReference type="NCBIfam" id="NF001786">
    <property type="entry name" value="PRK00517.2-4"/>
    <property type="match status" value="1"/>
</dbReference>
<dbReference type="PANTHER" id="PTHR43648">
    <property type="entry name" value="ELECTRON TRANSFER FLAVOPROTEIN BETA SUBUNIT LYSINE METHYLTRANSFERASE"/>
    <property type="match status" value="1"/>
</dbReference>
<dbReference type="PANTHER" id="PTHR43648:SF1">
    <property type="entry name" value="ELECTRON TRANSFER FLAVOPROTEIN BETA SUBUNIT LYSINE METHYLTRANSFERASE"/>
    <property type="match status" value="1"/>
</dbReference>
<dbReference type="Pfam" id="PF06325">
    <property type="entry name" value="PrmA"/>
    <property type="match status" value="1"/>
</dbReference>
<dbReference type="PIRSF" id="PIRSF000401">
    <property type="entry name" value="RPL11_MTase"/>
    <property type="match status" value="1"/>
</dbReference>
<dbReference type="SUPFAM" id="SSF53335">
    <property type="entry name" value="S-adenosyl-L-methionine-dependent methyltransferases"/>
    <property type="match status" value="1"/>
</dbReference>
<feature type="chain" id="PRO_1000046005" description="Ribosomal protein L11 methyltransferase">
    <location>
        <begin position="1"/>
        <end position="281"/>
    </location>
</feature>
<feature type="binding site" evidence="1">
    <location>
        <position position="133"/>
    </location>
    <ligand>
        <name>S-adenosyl-L-methionine</name>
        <dbReference type="ChEBI" id="CHEBI:59789"/>
    </ligand>
</feature>
<feature type="binding site" evidence="1">
    <location>
        <position position="154"/>
    </location>
    <ligand>
        <name>S-adenosyl-L-methionine</name>
        <dbReference type="ChEBI" id="CHEBI:59789"/>
    </ligand>
</feature>
<feature type="binding site" evidence="1">
    <location>
        <position position="175"/>
    </location>
    <ligand>
        <name>S-adenosyl-L-methionine</name>
        <dbReference type="ChEBI" id="CHEBI:59789"/>
    </ligand>
</feature>
<feature type="binding site" evidence="1">
    <location>
        <position position="216"/>
    </location>
    <ligand>
        <name>S-adenosyl-L-methionine</name>
        <dbReference type="ChEBI" id="CHEBI:59789"/>
    </ligand>
</feature>
<organism>
    <name type="scientific">Campylobacter jejuni (strain RM1221)</name>
    <dbReference type="NCBI Taxonomy" id="195099"/>
    <lineage>
        <taxon>Bacteria</taxon>
        <taxon>Pseudomonadati</taxon>
        <taxon>Campylobacterota</taxon>
        <taxon>Epsilonproteobacteria</taxon>
        <taxon>Campylobacterales</taxon>
        <taxon>Campylobacteraceae</taxon>
        <taxon>Campylobacter</taxon>
    </lineage>
</organism>
<comment type="function">
    <text evidence="1">Methylates ribosomal protein L11.</text>
</comment>
<comment type="catalytic activity">
    <reaction evidence="1">
        <text>L-lysyl-[protein] + 3 S-adenosyl-L-methionine = N(6),N(6),N(6)-trimethyl-L-lysyl-[protein] + 3 S-adenosyl-L-homocysteine + 3 H(+)</text>
        <dbReference type="Rhea" id="RHEA:54192"/>
        <dbReference type="Rhea" id="RHEA-COMP:9752"/>
        <dbReference type="Rhea" id="RHEA-COMP:13826"/>
        <dbReference type="ChEBI" id="CHEBI:15378"/>
        <dbReference type="ChEBI" id="CHEBI:29969"/>
        <dbReference type="ChEBI" id="CHEBI:57856"/>
        <dbReference type="ChEBI" id="CHEBI:59789"/>
        <dbReference type="ChEBI" id="CHEBI:61961"/>
    </reaction>
</comment>
<comment type="subcellular location">
    <subcellularLocation>
        <location evidence="1">Cytoplasm</location>
    </subcellularLocation>
</comment>
<comment type="similarity">
    <text evidence="1">Belongs to the methyltransferase superfamily. PrmA family.</text>
</comment>
<reference key="1">
    <citation type="journal article" date="2005" name="PLoS Biol.">
        <title>Major structural differences and novel potential virulence mechanisms from the genomes of multiple Campylobacter species.</title>
        <authorList>
            <person name="Fouts D.E."/>
            <person name="Mongodin E.F."/>
            <person name="Mandrell R.E."/>
            <person name="Miller W.G."/>
            <person name="Rasko D.A."/>
            <person name="Ravel J."/>
            <person name="Brinkac L.M."/>
            <person name="DeBoy R.T."/>
            <person name="Parker C.T."/>
            <person name="Daugherty S.C."/>
            <person name="Dodson R.J."/>
            <person name="Durkin A.S."/>
            <person name="Madupu R."/>
            <person name="Sullivan S.A."/>
            <person name="Shetty J.U."/>
            <person name="Ayodeji M.A."/>
            <person name="Shvartsbeyn A."/>
            <person name="Schatz M.C."/>
            <person name="Badger J.H."/>
            <person name="Fraser C.M."/>
            <person name="Nelson K.E."/>
        </authorList>
    </citation>
    <scope>NUCLEOTIDE SEQUENCE [LARGE SCALE GENOMIC DNA]</scope>
    <source>
        <strain>RM1221</strain>
    </source>
</reference>
<evidence type="ECO:0000255" key="1">
    <source>
        <dbReference type="HAMAP-Rule" id="MF_00735"/>
    </source>
</evidence>
<proteinExistence type="inferred from homology"/>
<protein>
    <recommendedName>
        <fullName evidence="1">Ribosomal protein L11 methyltransferase</fullName>
        <shortName evidence="1">L11 Mtase</shortName>
        <ecNumber evidence="1">2.1.1.-</ecNumber>
    </recommendedName>
</protein>
<name>PRMA_CAMJR</name>
<gene>
    <name evidence="1" type="primary">prmA</name>
    <name type="ordered locus">CJE1260</name>
</gene>
<accession>Q5HTY7</accession>
<sequence>MQKKYYELFFIVEERYKNLFLDFAFDLGIEAIEEKDNGVYIRSHESLEEFSWALEIFAQKLTTTFNLNHKIISNLSLVEKENKDWIQEYKKGIKPILVDNVYIHTTWQEEKKNCINIKINPALAFGSGHHESTYSCVKFLQKFSKSKLRALDLGCGSGILGIIMAKFGCNVEICDTDELAIDSSLENARLNGVDFHKAWCGSIDKANGLYNLIVANIIADVILILEKDIKNHLEDNAILILSGILDKYSTRIKEKFQDLELIDEIQINEWCSFVYKNNKKG</sequence>
<keyword id="KW-0963">Cytoplasm</keyword>
<keyword id="KW-0489">Methyltransferase</keyword>
<keyword id="KW-0949">S-adenosyl-L-methionine</keyword>
<keyword id="KW-0808">Transferase</keyword>